<dbReference type="EC" id="6.3.4.20" evidence="1"/>
<dbReference type="EMBL" id="CP000050">
    <property type="protein sequence ID" value="AAY48215.1"/>
    <property type="molecule type" value="Genomic_DNA"/>
</dbReference>
<dbReference type="RefSeq" id="WP_011038130.1">
    <property type="nucleotide sequence ID" value="NZ_CP155948.1"/>
</dbReference>
<dbReference type="SMR" id="Q4UXK8"/>
<dbReference type="KEGG" id="xcb:XC_1145"/>
<dbReference type="HOGENOM" id="CLU_081854_1_1_6"/>
<dbReference type="UniPathway" id="UPA00391"/>
<dbReference type="Proteomes" id="UP000000420">
    <property type="component" value="Chromosome"/>
</dbReference>
<dbReference type="GO" id="GO:0005524">
    <property type="term" value="F:ATP binding"/>
    <property type="evidence" value="ECO:0007669"/>
    <property type="project" value="UniProtKB-UniRule"/>
</dbReference>
<dbReference type="GO" id="GO:0016879">
    <property type="term" value="F:ligase activity, forming carbon-nitrogen bonds"/>
    <property type="evidence" value="ECO:0007669"/>
    <property type="project" value="UniProtKB-UniRule"/>
</dbReference>
<dbReference type="GO" id="GO:0008270">
    <property type="term" value="F:zinc ion binding"/>
    <property type="evidence" value="ECO:0007669"/>
    <property type="project" value="UniProtKB-UniRule"/>
</dbReference>
<dbReference type="GO" id="GO:0008616">
    <property type="term" value="P:queuosine biosynthetic process"/>
    <property type="evidence" value="ECO:0007669"/>
    <property type="project" value="UniProtKB-UniRule"/>
</dbReference>
<dbReference type="CDD" id="cd01995">
    <property type="entry name" value="QueC-like"/>
    <property type="match status" value="1"/>
</dbReference>
<dbReference type="FunFam" id="3.40.50.620:FF:000131">
    <property type="entry name" value="7-cyano-7-deazaguanine synthase"/>
    <property type="match status" value="1"/>
</dbReference>
<dbReference type="Gene3D" id="3.40.50.620">
    <property type="entry name" value="HUPs"/>
    <property type="match status" value="1"/>
</dbReference>
<dbReference type="HAMAP" id="MF_01633">
    <property type="entry name" value="QueC"/>
    <property type="match status" value="1"/>
</dbReference>
<dbReference type="InterPro" id="IPR018317">
    <property type="entry name" value="QueC"/>
</dbReference>
<dbReference type="InterPro" id="IPR014729">
    <property type="entry name" value="Rossmann-like_a/b/a_fold"/>
</dbReference>
<dbReference type="NCBIfam" id="TIGR00364">
    <property type="entry name" value="7-cyano-7-deazaguanine synthase QueC"/>
    <property type="match status" value="1"/>
</dbReference>
<dbReference type="PANTHER" id="PTHR42914">
    <property type="entry name" value="7-CYANO-7-DEAZAGUANINE SYNTHASE"/>
    <property type="match status" value="1"/>
</dbReference>
<dbReference type="PANTHER" id="PTHR42914:SF1">
    <property type="entry name" value="7-CYANO-7-DEAZAGUANINE SYNTHASE"/>
    <property type="match status" value="1"/>
</dbReference>
<dbReference type="Pfam" id="PF06508">
    <property type="entry name" value="QueC"/>
    <property type="match status" value="1"/>
</dbReference>
<dbReference type="PIRSF" id="PIRSF006293">
    <property type="entry name" value="ExsB"/>
    <property type="match status" value="1"/>
</dbReference>
<dbReference type="SUPFAM" id="SSF52402">
    <property type="entry name" value="Adenine nucleotide alpha hydrolases-like"/>
    <property type="match status" value="1"/>
</dbReference>
<gene>
    <name evidence="1" type="primary">queC</name>
    <name type="ordered locus">XC_1145</name>
</gene>
<sequence length="224" mass="23037">MKKAVVLLSGGMDSAAVIALAQEQGFAVHALSVRYGQRHTSELDAAARVAAAQGVVAHKVVDVDLRSIGGSALTADIDVPEAGGAGIPVTYVPARNTIMLSLALGWAEVVGANDLFCGVNAVDYSGYPDCRPEFVRAFEVLANLATKAGVEGAGLRVHAPLQFLSKADIVRAGVRLGVDFGLTVSCYNADADGRACGHCDACRLRAAGFADAGVPDPTHYAISS</sequence>
<accession>Q4UXK8</accession>
<keyword id="KW-0067">ATP-binding</keyword>
<keyword id="KW-0436">Ligase</keyword>
<keyword id="KW-0479">Metal-binding</keyword>
<keyword id="KW-0547">Nucleotide-binding</keyword>
<keyword id="KW-0671">Queuosine biosynthesis</keyword>
<keyword id="KW-0862">Zinc</keyword>
<protein>
    <recommendedName>
        <fullName evidence="1">7-cyano-7-deazaguanine synthase</fullName>
        <ecNumber evidence="1">6.3.4.20</ecNumber>
    </recommendedName>
    <alternativeName>
        <fullName evidence="1">7-cyano-7-carbaguanine synthase</fullName>
    </alternativeName>
    <alternativeName>
        <fullName evidence="1">PreQ(0) synthase</fullName>
    </alternativeName>
    <alternativeName>
        <fullName evidence="1">Queuosine biosynthesis protein QueC</fullName>
    </alternativeName>
</protein>
<organism>
    <name type="scientific">Xanthomonas campestris pv. campestris (strain 8004)</name>
    <dbReference type="NCBI Taxonomy" id="314565"/>
    <lineage>
        <taxon>Bacteria</taxon>
        <taxon>Pseudomonadati</taxon>
        <taxon>Pseudomonadota</taxon>
        <taxon>Gammaproteobacteria</taxon>
        <taxon>Lysobacterales</taxon>
        <taxon>Lysobacteraceae</taxon>
        <taxon>Xanthomonas</taxon>
    </lineage>
</organism>
<reference key="1">
    <citation type="journal article" date="2005" name="Genome Res.">
        <title>Comparative and functional genomic analyses of the pathogenicity of phytopathogen Xanthomonas campestris pv. campestris.</title>
        <authorList>
            <person name="Qian W."/>
            <person name="Jia Y."/>
            <person name="Ren S.-X."/>
            <person name="He Y.-Q."/>
            <person name="Feng J.-X."/>
            <person name="Lu L.-F."/>
            <person name="Sun Q."/>
            <person name="Ying G."/>
            <person name="Tang D.-J."/>
            <person name="Tang H."/>
            <person name="Wu W."/>
            <person name="Hao P."/>
            <person name="Wang L."/>
            <person name="Jiang B.-L."/>
            <person name="Zeng S."/>
            <person name="Gu W.-Y."/>
            <person name="Lu G."/>
            <person name="Rong L."/>
            <person name="Tian Y."/>
            <person name="Yao Z."/>
            <person name="Fu G."/>
            <person name="Chen B."/>
            <person name="Fang R."/>
            <person name="Qiang B."/>
            <person name="Chen Z."/>
            <person name="Zhao G.-P."/>
            <person name="Tang J.-L."/>
            <person name="He C."/>
        </authorList>
    </citation>
    <scope>NUCLEOTIDE SEQUENCE [LARGE SCALE GENOMIC DNA]</scope>
    <source>
        <strain>8004</strain>
    </source>
</reference>
<name>QUEC_XANC8</name>
<feature type="chain" id="PRO_0000246963" description="7-cyano-7-deazaguanine synthase">
    <location>
        <begin position="1"/>
        <end position="224"/>
    </location>
</feature>
<feature type="binding site" evidence="1">
    <location>
        <begin position="8"/>
        <end position="18"/>
    </location>
    <ligand>
        <name>ATP</name>
        <dbReference type="ChEBI" id="CHEBI:30616"/>
    </ligand>
</feature>
<feature type="binding site" evidence="1">
    <location>
        <position position="186"/>
    </location>
    <ligand>
        <name>Zn(2+)</name>
        <dbReference type="ChEBI" id="CHEBI:29105"/>
    </ligand>
</feature>
<feature type="binding site" evidence="1">
    <location>
        <position position="196"/>
    </location>
    <ligand>
        <name>Zn(2+)</name>
        <dbReference type="ChEBI" id="CHEBI:29105"/>
    </ligand>
</feature>
<feature type="binding site" evidence="1">
    <location>
        <position position="199"/>
    </location>
    <ligand>
        <name>Zn(2+)</name>
        <dbReference type="ChEBI" id="CHEBI:29105"/>
    </ligand>
</feature>
<feature type="binding site" evidence="1">
    <location>
        <position position="202"/>
    </location>
    <ligand>
        <name>Zn(2+)</name>
        <dbReference type="ChEBI" id="CHEBI:29105"/>
    </ligand>
</feature>
<comment type="function">
    <text evidence="1">Catalyzes the ATP-dependent conversion of 7-carboxy-7-deazaguanine (CDG) to 7-cyano-7-deazaguanine (preQ(0)).</text>
</comment>
<comment type="catalytic activity">
    <reaction evidence="1">
        <text>7-carboxy-7-deazaguanine + NH4(+) + ATP = 7-cyano-7-deazaguanine + ADP + phosphate + H2O + H(+)</text>
        <dbReference type="Rhea" id="RHEA:27982"/>
        <dbReference type="ChEBI" id="CHEBI:15377"/>
        <dbReference type="ChEBI" id="CHEBI:15378"/>
        <dbReference type="ChEBI" id="CHEBI:28938"/>
        <dbReference type="ChEBI" id="CHEBI:30616"/>
        <dbReference type="ChEBI" id="CHEBI:43474"/>
        <dbReference type="ChEBI" id="CHEBI:45075"/>
        <dbReference type="ChEBI" id="CHEBI:61036"/>
        <dbReference type="ChEBI" id="CHEBI:456216"/>
        <dbReference type="EC" id="6.3.4.20"/>
    </reaction>
</comment>
<comment type="cofactor">
    <cofactor evidence="1">
        <name>Zn(2+)</name>
        <dbReference type="ChEBI" id="CHEBI:29105"/>
    </cofactor>
    <text evidence="1">Binds 1 zinc ion per subunit.</text>
</comment>
<comment type="pathway">
    <text evidence="1">Purine metabolism; 7-cyano-7-deazaguanine biosynthesis.</text>
</comment>
<comment type="similarity">
    <text evidence="1">Belongs to the QueC family.</text>
</comment>
<proteinExistence type="inferred from homology"/>
<evidence type="ECO:0000255" key="1">
    <source>
        <dbReference type="HAMAP-Rule" id="MF_01633"/>
    </source>
</evidence>